<keyword id="KW-1003">Cell membrane</keyword>
<keyword id="KW-0868">Chloride</keyword>
<keyword id="KW-0157">Chromophore</keyword>
<keyword id="KW-0406">Ion transport</keyword>
<keyword id="KW-0472">Membrane</keyword>
<keyword id="KW-0600">Photoreceptor protein</keyword>
<keyword id="KW-0675">Receptor</keyword>
<keyword id="KW-0681">Retinal protein</keyword>
<keyword id="KW-0716">Sensory transduction</keyword>
<keyword id="KW-0812">Transmembrane</keyword>
<keyword id="KW-1133">Transmembrane helix</keyword>
<keyword id="KW-0813">Transport</keyword>
<comment type="function">
    <text>Light-driven chloride pump.</text>
</comment>
<comment type="subcellular location">
    <subcellularLocation>
        <location>Cell membrane</location>
        <topology>Multi-pass membrane protein</topology>
    </subcellularLocation>
</comment>
<comment type="similarity">
    <text evidence="2">Belongs to the archaeal/bacterial/fungal opsin family.</text>
</comment>
<dbReference type="SMR" id="Q53461"/>
<dbReference type="GO" id="GO:0005886">
    <property type="term" value="C:plasma membrane"/>
    <property type="evidence" value="ECO:0007669"/>
    <property type="project" value="UniProtKB-SubCell"/>
</dbReference>
<dbReference type="GO" id="GO:0005216">
    <property type="term" value="F:monoatomic ion channel activity"/>
    <property type="evidence" value="ECO:0007669"/>
    <property type="project" value="InterPro"/>
</dbReference>
<dbReference type="GO" id="GO:0009881">
    <property type="term" value="F:photoreceptor activity"/>
    <property type="evidence" value="ECO:0007669"/>
    <property type="project" value="UniProtKB-KW"/>
</dbReference>
<dbReference type="GO" id="GO:0007602">
    <property type="term" value="P:phototransduction"/>
    <property type="evidence" value="ECO:0007669"/>
    <property type="project" value="UniProtKB-KW"/>
</dbReference>
<dbReference type="Gene3D" id="1.20.1070.10">
    <property type="entry name" value="Rhodopsin 7-helix transmembrane proteins"/>
    <property type="match status" value="1"/>
</dbReference>
<dbReference type="InterPro" id="IPR001425">
    <property type="entry name" value="Arc/bac/fun_rhodopsins"/>
</dbReference>
<dbReference type="InterPro" id="IPR018229">
    <property type="entry name" value="Rhodopsin_retinal_BS"/>
</dbReference>
<dbReference type="PANTHER" id="PTHR28286">
    <property type="match status" value="1"/>
</dbReference>
<dbReference type="PANTHER" id="PTHR28286:SF2">
    <property type="entry name" value="BACTERIORHODOPSIN _OPSIN, NOPA (EUROFUNG)"/>
    <property type="match status" value="1"/>
</dbReference>
<dbReference type="Pfam" id="PF01036">
    <property type="entry name" value="Bac_rhodopsin"/>
    <property type="match status" value="1"/>
</dbReference>
<dbReference type="PRINTS" id="PR00251">
    <property type="entry name" value="BACTRLOPSIN"/>
</dbReference>
<dbReference type="SMART" id="SM01021">
    <property type="entry name" value="Bac_rhodopsin"/>
    <property type="match status" value="1"/>
</dbReference>
<dbReference type="SUPFAM" id="SSF81321">
    <property type="entry name" value="Family A G protein-coupled receptor-like"/>
    <property type="match status" value="1"/>
</dbReference>
<dbReference type="PROSITE" id="PS00327">
    <property type="entry name" value="BACTERIAL_OPSIN_RET"/>
    <property type="match status" value="1"/>
</dbReference>
<accession>Q53461</accession>
<organism>
    <name type="scientific">Haloarcula argentinensis</name>
    <dbReference type="NCBI Taxonomy" id="43776"/>
    <lineage>
        <taxon>Archaea</taxon>
        <taxon>Methanobacteriati</taxon>
        <taxon>Methanobacteriota</taxon>
        <taxon>Stenosarchaea group</taxon>
        <taxon>Halobacteria</taxon>
        <taxon>Halobacteriales</taxon>
        <taxon>Haloarculaceae</taxon>
        <taxon>Haloarcula</taxon>
    </lineage>
</organism>
<sequence>PMILLALGLLADTDIASLFTAITMDIGMCVTGLAAALITSSHLLRWVFYGISCAFFVAVLYVLLVQWPADAEAAGTSEIFGTLKILTVVLWLGYPILWALGSEGVALLSVGVTSWGYSGLDILAKYVFAFI</sequence>
<protein>
    <recommendedName>
        <fullName>Cruxhalorhodopsin-1</fullName>
        <shortName>CHR-1</shortName>
    </recommendedName>
</protein>
<evidence type="ECO:0000250" key="1"/>
<evidence type="ECO:0000305" key="2"/>
<name>BACH_HALAR</name>
<gene>
    <name type="primary">choP1</name>
</gene>
<reference key="1">
    <citation type="journal article" date="1994" name="Arch. Biochem. Biophys.">
        <title>The novel ion pump rhodopsins from Haloarcula form a family independent from both the bacteriorhodopsin and archaerhodopsin families/tribes.</title>
        <authorList>
            <person name="Tateno M."/>
            <person name="Ihara K."/>
            <person name="Mukohata Y."/>
        </authorList>
    </citation>
    <scope>NUCLEOTIDE SEQUENCE [GENOMIC DNA]</scope>
</reference>
<feature type="chain" id="PRO_0000196267" description="Cruxhalorhodopsin-1">
    <location>
        <begin position="1" status="less than"/>
        <end position="131" status="greater than"/>
    </location>
</feature>
<feature type="transmembrane region" description="Helical; Name=Helix C" evidence="1">
    <location>
        <begin position="1" status="less than"/>
        <end position="11"/>
    </location>
</feature>
<feature type="topological domain" description="Cytoplasmic" evidence="1">
    <location>
        <begin position="12"/>
        <end position="14"/>
    </location>
</feature>
<feature type="transmembrane region" description="Helical; Name=Helix D" evidence="1">
    <location>
        <begin position="15"/>
        <end position="38"/>
    </location>
</feature>
<feature type="topological domain" description="Extracellular" evidence="1">
    <location>
        <begin position="39"/>
        <end position="41"/>
    </location>
</feature>
<feature type="transmembrane region" description="Helical; Name=Helix E" evidence="1">
    <location>
        <begin position="42"/>
        <end position="64"/>
    </location>
</feature>
<feature type="topological domain" description="Cytoplasmic" evidence="1">
    <location>
        <begin position="65"/>
        <end position="76"/>
    </location>
</feature>
<feature type="transmembrane region" description="Helical; Name=Helix F" evidence="1">
    <location>
        <begin position="77"/>
        <end position="100"/>
    </location>
</feature>
<feature type="topological domain" description="Extracellular" evidence="1">
    <location>
        <begin position="101"/>
        <end position="109"/>
    </location>
</feature>
<feature type="transmembrane region" description="Helical; Name=Helix G" evidence="1">
    <location>
        <begin position="110"/>
        <end position="131" status="greater than"/>
    </location>
</feature>
<feature type="modified residue" description="N6-(retinylidene)lysine" evidence="1">
    <location>
        <position position="125"/>
    </location>
</feature>
<feature type="non-terminal residue">
    <location>
        <position position="1"/>
    </location>
</feature>
<feature type="non-terminal residue">
    <location>
        <position position="131"/>
    </location>
</feature>
<proteinExistence type="inferred from homology"/>